<reference key="1">
    <citation type="journal article" date="2012" name="Stand. Genomic Sci.">
        <title>Complete genome sequence of Polynucleobacter necessarius subsp. asymbioticus type strain (QLW-P1DMWA-1(T)).</title>
        <authorList>
            <person name="Meincke L."/>
            <person name="Copeland A."/>
            <person name="Lapidus A."/>
            <person name="Lucas S."/>
            <person name="Berry K.W."/>
            <person name="Del Rio T.G."/>
            <person name="Hammon N."/>
            <person name="Dalin E."/>
            <person name="Tice H."/>
            <person name="Pitluck S."/>
            <person name="Richardson P."/>
            <person name="Bruce D."/>
            <person name="Goodwin L."/>
            <person name="Han C."/>
            <person name="Tapia R."/>
            <person name="Detter J.C."/>
            <person name="Schmutz J."/>
            <person name="Brettin T."/>
            <person name="Larimer F."/>
            <person name="Land M."/>
            <person name="Hauser L."/>
            <person name="Kyrpides N.C."/>
            <person name="Ivanova N."/>
            <person name="Goker M."/>
            <person name="Woyke T."/>
            <person name="Wu Q.L."/>
            <person name="Pockl M."/>
            <person name="Hahn M.W."/>
            <person name="Klenk H.P."/>
        </authorList>
    </citation>
    <scope>NUCLEOTIDE SEQUENCE [LARGE SCALE GENOMIC DNA]</scope>
    <source>
        <strain>DSM 18221 / CIP 109841 / QLW-P1DMWA-1</strain>
    </source>
</reference>
<gene>
    <name evidence="1" type="primary">murA</name>
    <name type="ordered locus">Pnuc_0105</name>
</gene>
<organism>
    <name type="scientific">Polynucleobacter asymbioticus (strain DSM 18221 / CIP 109841 / QLW-P1DMWA-1)</name>
    <name type="common">Polynucleobacter necessarius subsp. asymbioticus</name>
    <dbReference type="NCBI Taxonomy" id="312153"/>
    <lineage>
        <taxon>Bacteria</taxon>
        <taxon>Pseudomonadati</taxon>
        <taxon>Pseudomonadota</taxon>
        <taxon>Betaproteobacteria</taxon>
        <taxon>Burkholderiales</taxon>
        <taxon>Burkholderiaceae</taxon>
        <taxon>Polynucleobacter</taxon>
    </lineage>
</organism>
<comment type="function">
    <text evidence="1">Cell wall formation. Adds enolpyruvyl to UDP-N-acetylglucosamine.</text>
</comment>
<comment type="catalytic activity">
    <reaction evidence="1">
        <text>phosphoenolpyruvate + UDP-N-acetyl-alpha-D-glucosamine = UDP-N-acetyl-3-O-(1-carboxyvinyl)-alpha-D-glucosamine + phosphate</text>
        <dbReference type="Rhea" id="RHEA:18681"/>
        <dbReference type="ChEBI" id="CHEBI:43474"/>
        <dbReference type="ChEBI" id="CHEBI:57705"/>
        <dbReference type="ChEBI" id="CHEBI:58702"/>
        <dbReference type="ChEBI" id="CHEBI:68483"/>
        <dbReference type="EC" id="2.5.1.7"/>
    </reaction>
</comment>
<comment type="pathway">
    <text evidence="1">Cell wall biogenesis; peptidoglycan biosynthesis.</text>
</comment>
<comment type="subcellular location">
    <subcellularLocation>
        <location evidence="1">Cytoplasm</location>
    </subcellularLocation>
</comment>
<comment type="similarity">
    <text evidence="1">Belongs to the EPSP synthase family. MurA subfamily.</text>
</comment>
<name>MURA_POLAQ</name>
<sequence>MDKLRMTGGTPLNGEVTIAGAKNAALPILCACLLTDQPVVLRNLPDLQDVRTMLKLLQEIGVVVSFPDANNPNHVILNAAVIKSSEATYEMVKTMRASILVLGPLLARMHSAKVSLPGGCAIGARPVDQHIKGLKAMGASIKIKSGYIQAETKPTTERLKGASILTDMITVTGTENLLMAATLASGTTILENAAREPEVGDLAELLVKMGAKITGIGSDRLVIEGVEKLHGAEHSVIPDRIEAGTFLCAVAAAGGEVLVKHCRPDTLDAVIVKLKEAGLKMEIGPDWIKASMQGRPKAVSFRTSEYPAFPTDMQAQLMAVNAVANGNSTITETIFENRFMHVQELNRLGADIAIEGNTAIAQGVERLSGAIVMATDLRASASLVIAGLAAQGETQVDRIYHLDRGYDRMEQKLTRLGANIERIK</sequence>
<proteinExistence type="inferred from homology"/>
<keyword id="KW-0131">Cell cycle</keyword>
<keyword id="KW-0132">Cell division</keyword>
<keyword id="KW-0133">Cell shape</keyword>
<keyword id="KW-0961">Cell wall biogenesis/degradation</keyword>
<keyword id="KW-0963">Cytoplasm</keyword>
<keyword id="KW-0573">Peptidoglycan synthesis</keyword>
<keyword id="KW-0670">Pyruvate</keyword>
<keyword id="KW-1185">Reference proteome</keyword>
<keyword id="KW-0808">Transferase</keyword>
<protein>
    <recommendedName>
        <fullName evidence="1">UDP-N-acetylglucosamine 1-carboxyvinyltransferase</fullName>
        <ecNumber evidence="1">2.5.1.7</ecNumber>
    </recommendedName>
    <alternativeName>
        <fullName evidence="1">Enoylpyruvate transferase</fullName>
    </alternativeName>
    <alternativeName>
        <fullName evidence="1">UDP-N-acetylglucosamine enolpyruvyl transferase</fullName>
        <shortName evidence="1">EPT</shortName>
    </alternativeName>
</protein>
<accession>A4SV13</accession>
<evidence type="ECO:0000255" key="1">
    <source>
        <dbReference type="HAMAP-Rule" id="MF_00111"/>
    </source>
</evidence>
<feature type="chain" id="PRO_1000075976" description="UDP-N-acetylglucosamine 1-carboxyvinyltransferase">
    <location>
        <begin position="1"/>
        <end position="424"/>
    </location>
</feature>
<feature type="active site" description="Proton donor" evidence="1">
    <location>
        <position position="120"/>
    </location>
</feature>
<feature type="binding site" evidence="1">
    <location>
        <begin position="22"/>
        <end position="23"/>
    </location>
    <ligand>
        <name>phosphoenolpyruvate</name>
        <dbReference type="ChEBI" id="CHEBI:58702"/>
    </ligand>
</feature>
<feature type="binding site" evidence="1">
    <location>
        <position position="96"/>
    </location>
    <ligand>
        <name>UDP-N-acetyl-alpha-D-glucosamine</name>
        <dbReference type="ChEBI" id="CHEBI:57705"/>
    </ligand>
</feature>
<feature type="binding site" evidence="1">
    <location>
        <begin position="125"/>
        <end position="129"/>
    </location>
    <ligand>
        <name>UDP-N-acetyl-alpha-D-glucosamine</name>
        <dbReference type="ChEBI" id="CHEBI:57705"/>
    </ligand>
</feature>
<feature type="binding site" evidence="1">
    <location>
        <position position="312"/>
    </location>
    <ligand>
        <name>UDP-N-acetyl-alpha-D-glucosamine</name>
        <dbReference type="ChEBI" id="CHEBI:57705"/>
    </ligand>
</feature>
<feature type="binding site" evidence="1">
    <location>
        <position position="334"/>
    </location>
    <ligand>
        <name>UDP-N-acetyl-alpha-D-glucosamine</name>
        <dbReference type="ChEBI" id="CHEBI:57705"/>
    </ligand>
</feature>
<feature type="modified residue" description="2-(S-cysteinyl)pyruvic acid O-phosphothioketal" evidence="1">
    <location>
        <position position="120"/>
    </location>
</feature>
<dbReference type="EC" id="2.5.1.7" evidence="1"/>
<dbReference type="EMBL" id="CP000655">
    <property type="protein sequence ID" value="ABP33327.1"/>
    <property type="molecule type" value="Genomic_DNA"/>
</dbReference>
<dbReference type="RefSeq" id="WP_011901952.1">
    <property type="nucleotide sequence ID" value="NC_009379.1"/>
</dbReference>
<dbReference type="SMR" id="A4SV13"/>
<dbReference type="GeneID" id="31480452"/>
<dbReference type="KEGG" id="pnu:Pnuc_0105"/>
<dbReference type="eggNOG" id="COG0766">
    <property type="taxonomic scope" value="Bacteria"/>
</dbReference>
<dbReference type="HOGENOM" id="CLU_027387_0_0_4"/>
<dbReference type="UniPathway" id="UPA00219"/>
<dbReference type="Proteomes" id="UP000000231">
    <property type="component" value="Chromosome"/>
</dbReference>
<dbReference type="GO" id="GO:0005737">
    <property type="term" value="C:cytoplasm"/>
    <property type="evidence" value="ECO:0007669"/>
    <property type="project" value="UniProtKB-SubCell"/>
</dbReference>
<dbReference type="GO" id="GO:0008760">
    <property type="term" value="F:UDP-N-acetylglucosamine 1-carboxyvinyltransferase activity"/>
    <property type="evidence" value="ECO:0007669"/>
    <property type="project" value="UniProtKB-UniRule"/>
</dbReference>
<dbReference type="GO" id="GO:0051301">
    <property type="term" value="P:cell division"/>
    <property type="evidence" value="ECO:0007669"/>
    <property type="project" value="UniProtKB-KW"/>
</dbReference>
<dbReference type="GO" id="GO:0071555">
    <property type="term" value="P:cell wall organization"/>
    <property type="evidence" value="ECO:0007669"/>
    <property type="project" value="UniProtKB-KW"/>
</dbReference>
<dbReference type="GO" id="GO:0009252">
    <property type="term" value="P:peptidoglycan biosynthetic process"/>
    <property type="evidence" value="ECO:0007669"/>
    <property type="project" value="UniProtKB-UniRule"/>
</dbReference>
<dbReference type="GO" id="GO:0008360">
    <property type="term" value="P:regulation of cell shape"/>
    <property type="evidence" value="ECO:0007669"/>
    <property type="project" value="UniProtKB-KW"/>
</dbReference>
<dbReference type="GO" id="GO:0019277">
    <property type="term" value="P:UDP-N-acetylgalactosamine biosynthetic process"/>
    <property type="evidence" value="ECO:0007669"/>
    <property type="project" value="InterPro"/>
</dbReference>
<dbReference type="CDD" id="cd01555">
    <property type="entry name" value="UdpNAET"/>
    <property type="match status" value="1"/>
</dbReference>
<dbReference type="FunFam" id="3.65.10.10:FF:000001">
    <property type="entry name" value="UDP-N-acetylglucosamine 1-carboxyvinyltransferase"/>
    <property type="match status" value="1"/>
</dbReference>
<dbReference type="Gene3D" id="3.65.10.10">
    <property type="entry name" value="Enolpyruvate transferase domain"/>
    <property type="match status" value="2"/>
</dbReference>
<dbReference type="HAMAP" id="MF_00111">
    <property type="entry name" value="MurA"/>
    <property type="match status" value="1"/>
</dbReference>
<dbReference type="InterPro" id="IPR001986">
    <property type="entry name" value="Enolpyruvate_Tfrase_dom"/>
</dbReference>
<dbReference type="InterPro" id="IPR036968">
    <property type="entry name" value="Enolpyruvate_Tfrase_sf"/>
</dbReference>
<dbReference type="InterPro" id="IPR050068">
    <property type="entry name" value="MurA_subfamily"/>
</dbReference>
<dbReference type="InterPro" id="IPR013792">
    <property type="entry name" value="RNA3'P_cycl/enolpyr_Trfase_a/b"/>
</dbReference>
<dbReference type="InterPro" id="IPR005750">
    <property type="entry name" value="UDP_GlcNAc_COvinyl_MurA"/>
</dbReference>
<dbReference type="NCBIfam" id="TIGR01072">
    <property type="entry name" value="murA"/>
    <property type="match status" value="1"/>
</dbReference>
<dbReference type="NCBIfam" id="NF006873">
    <property type="entry name" value="PRK09369.1"/>
    <property type="match status" value="1"/>
</dbReference>
<dbReference type="PANTHER" id="PTHR43783">
    <property type="entry name" value="UDP-N-ACETYLGLUCOSAMINE 1-CARBOXYVINYLTRANSFERASE"/>
    <property type="match status" value="1"/>
</dbReference>
<dbReference type="PANTHER" id="PTHR43783:SF1">
    <property type="entry name" value="UDP-N-ACETYLGLUCOSAMINE 1-CARBOXYVINYLTRANSFERASE"/>
    <property type="match status" value="1"/>
</dbReference>
<dbReference type="Pfam" id="PF00275">
    <property type="entry name" value="EPSP_synthase"/>
    <property type="match status" value="1"/>
</dbReference>
<dbReference type="SUPFAM" id="SSF55205">
    <property type="entry name" value="EPT/RTPC-like"/>
    <property type="match status" value="1"/>
</dbReference>